<reference key="1">
    <citation type="journal article" date="2005" name="PLoS Biol.">
        <title>The genome sequence of Rickettsia felis identifies the first putative conjugative plasmid in an obligate intracellular parasite.</title>
        <authorList>
            <person name="Ogata H."/>
            <person name="Renesto P."/>
            <person name="Audic S."/>
            <person name="Robert C."/>
            <person name="Blanc G."/>
            <person name="Fournier P.-E."/>
            <person name="Parinello H."/>
            <person name="Claverie J.-M."/>
            <person name="Raoult D."/>
        </authorList>
    </citation>
    <scope>NUCLEOTIDE SEQUENCE [LARGE SCALE GENOMIC DNA]</scope>
    <source>
        <strain>ATCC VR-1525 / URRWXCal2</strain>
    </source>
</reference>
<protein>
    <recommendedName>
        <fullName>Putative ankyrin repeat protein RF_0987</fullName>
    </recommendedName>
</protein>
<name>Y987_RICFE</name>
<sequence>MLNKLCKILFFINLLLVAVQSYASPPPSLPAAEIDTKDKDVSSNSDISFFDKFKQFFSKSKKKNISPKQPNEQTKAANQEEPKLASQEHTEADASEPFIDTGNTALPSVTASNEHENSVNLASHDIQESNETEASKPFIDVGNTALPSAASNDVHTNTEHENSTNLASNIITPNVPRPIVSMPPAQAGSYVVPPQRPVQIYKPTNLPPVHKPIPLNPSPEANKEEESVAPIAPQSIPNMPAVSPPVVSPPVIQDTTTPSTMPTTVPPAVPSNVPAPPVMPTNQPSTQPITPPSPNTPVTTPSKVVPTTDSSAEINNSQETFVAVSDVPKKQDWNTPLIPVVVVKPNQPQALEKQVNNNQTTNNQEKSPPVSSSNVTIQKQDDKVNNETSESTTKFVKDETQMLLLPDDDIVLGKLTEQATLEQMDMYAYIELFQKKEEWIASAKRRKVVESFIKYDNDINKKKDIYANLSYCKAVDNAFRAVDRNNLFGLRALLDVYPILQEKSRSGETLLTAAIYNDNYYLAKFLVIRGIKISTLNDECQYPLDIALAQGNANIACMLIKAKGYQ</sequence>
<organism>
    <name type="scientific">Rickettsia felis (strain ATCC VR-1525 / URRWXCal2)</name>
    <name type="common">Rickettsia azadi</name>
    <dbReference type="NCBI Taxonomy" id="315456"/>
    <lineage>
        <taxon>Bacteria</taxon>
        <taxon>Pseudomonadati</taxon>
        <taxon>Pseudomonadota</taxon>
        <taxon>Alphaproteobacteria</taxon>
        <taxon>Rickettsiales</taxon>
        <taxon>Rickettsiaceae</taxon>
        <taxon>Rickettsieae</taxon>
        <taxon>Rickettsia</taxon>
        <taxon>spotted fever group</taxon>
    </lineage>
</organism>
<evidence type="ECO:0000256" key="1">
    <source>
        <dbReference type="SAM" id="MobiDB-lite"/>
    </source>
</evidence>
<feature type="chain" id="PRO_0000281757" description="Putative ankyrin repeat protein RF_0987">
    <location>
        <begin position="1"/>
        <end position="566"/>
    </location>
</feature>
<feature type="repeat" description="ANK 1">
    <location>
        <begin position="506"/>
        <end position="535"/>
    </location>
</feature>
<feature type="repeat" description="ANK 2">
    <location>
        <begin position="539"/>
        <end position="566"/>
    </location>
</feature>
<feature type="region of interest" description="Disordered" evidence="1">
    <location>
        <begin position="61"/>
        <end position="118"/>
    </location>
</feature>
<feature type="region of interest" description="Disordered" evidence="1">
    <location>
        <begin position="276"/>
        <end position="314"/>
    </location>
</feature>
<feature type="region of interest" description="Disordered" evidence="1">
    <location>
        <begin position="355"/>
        <end position="392"/>
    </location>
</feature>
<feature type="compositionally biased region" description="Basic and acidic residues" evidence="1">
    <location>
        <begin position="78"/>
        <end position="92"/>
    </location>
</feature>
<feature type="compositionally biased region" description="Polar residues" evidence="1">
    <location>
        <begin position="101"/>
        <end position="112"/>
    </location>
</feature>
<feature type="compositionally biased region" description="Low complexity" evidence="1">
    <location>
        <begin position="296"/>
        <end position="308"/>
    </location>
</feature>
<feature type="compositionally biased region" description="Polar residues" evidence="1">
    <location>
        <begin position="365"/>
        <end position="378"/>
    </location>
</feature>
<proteinExistence type="predicted"/>
<keyword id="KW-0040">ANK repeat</keyword>
<keyword id="KW-0677">Repeat</keyword>
<accession>Q4UKT5</accession>
<gene>
    <name type="ordered locus">RF_0987</name>
</gene>
<dbReference type="EMBL" id="CP000053">
    <property type="protein sequence ID" value="AAY61838.1"/>
    <property type="molecule type" value="Genomic_DNA"/>
</dbReference>
<dbReference type="SMR" id="Q4UKT5"/>
<dbReference type="STRING" id="315456.RF_0987"/>
<dbReference type="KEGG" id="rfe:RF_0987"/>
<dbReference type="eggNOG" id="COG0666">
    <property type="taxonomic scope" value="Bacteria"/>
</dbReference>
<dbReference type="HOGENOM" id="CLU_469190_0_0_5"/>
<dbReference type="OrthoDB" id="7161226at2"/>
<dbReference type="Proteomes" id="UP000008548">
    <property type="component" value="Chromosome"/>
</dbReference>
<dbReference type="Gene3D" id="1.25.40.20">
    <property type="entry name" value="Ankyrin repeat-containing domain"/>
    <property type="match status" value="1"/>
</dbReference>
<dbReference type="InterPro" id="IPR002110">
    <property type="entry name" value="Ankyrin_rpt"/>
</dbReference>
<dbReference type="InterPro" id="IPR036770">
    <property type="entry name" value="Ankyrin_rpt-contain_sf"/>
</dbReference>
<dbReference type="Pfam" id="PF13637">
    <property type="entry name" value="Ank_4"/>
    <property type="match status" value="1"/>
</dbReference>
<dbReference type="SUPFAM" id="SSF48403">
    <property type="entry name" value="Ankyrin repeat"/>
    <property type="match status" value="1"/>
</dbReference>
<dbReference type="PROSITE" id="PS50297">
    <property type="entry name" value="ANK_REP_REGION"/>
    <property type="match status" value="1"/>
</dbReference>